<evidence type="ECO:0000255" key="1">
    <source>
        <dbReference type="HAMAP-Rule" id="MF_01387"/>
    </source>
</evidence>
<proteinExistence type="inferred from homology"/>
<protein>
    <recommendedName>
        <fullName evidence="1">Chromatin protein Cren7</fullName>
    </recommendedName>
</protein>
<feature type="chain" id="PRO_1000215134" description="Chromatin protein Cren7">
    <location>
        <begin position="1"/>
        <end position="60"/>
    </location>
</feature>
<name>CREN7_SACI1</name>
<organism>
    <name type="scientific">Saccharolobus islandicus (strain Y.N.15.51 / Yellowstone #2)</name>
    <name type="common">Sulfolobus islandicus</name>
    <dbReference type="NCBI Taxonomy" id="419942"/>
    <lineage>
        <taxon>Archaea</taxon>
        <taxon>Thermoproteota</taxon>
        <taxon>Thermoprotei</taxon>
        <taxon>Sulfolobales</taxon>
        <taxon>Sulfolobaceae</taxon>
        <taxon>Saccharolobus</taxon>
    </lineage>
</organism>
<accession>C3NHU3</accession>
<sequence>MSSGKKAVKVKTPAGKEAELVPEKVWALAPKGRKGVKIGLFKDPETGKYFRHKLPDDYPI</sequence>
<gene>
    <name evidence="1" type="primary">creN7</name>
    <name type="ordered locus">YN1551_1615</name>
</gene>
<keyword id="KW-0158">Chromosome</keyword>
<keyword id="KW-0963">Cytoplasm</keyword>
<keyword id="KW-0238">DNA-binding</keyword>
<keyword id="KW-0488">Methylation</keyword>
<reference key="1">
    <citation type="journal article" date="2009" name="Proc. Natl. Acad. Sci. U.S.A.">
        <title>Biogeography of the Sulfolobus islandicus pan-genome.</title>
        <authorList>
            <person name="Reno M.L."/>
            <person name="Held N.L."/>
            <person name="Fields C.J."/>
            <person name="Burke P.V."/>
            <person name="Whitaker R.J."/>
        </authorList>
    </citation>
    <scope>NUCLEOTIDE SEQUENCE [LARGE SCALE GENOMIC DNA]</scope>
    <source>
        <strain>Y.N.15.51 / Yellowstone #2</strain>
    </source>
</reference>
<comment type="function">
    <text evidence="1">A chromatin protein, binds double-stranded DNA without sequence specificity. Constrains negative DNA supercoils.</text>
</comment>
<comment type="subunit">
    <text evidence="1">Monomer.</text>
</comment>
<comment type="subcellular location">
    <subcellularLocation>
        <location evidence="1">Chromosome</location>
    </subcellularLocation>
    <subcellularLocation>
        <location evidence="1">Cytoplasm</location>
    </subcellularLocation>
</comment>
<comment type="PTM">
    <text evidence="1">Methylated at multiple sites, to varying extents.</text>
</comment>
<comment type="similarity">
    <text evidence="1">Belongs to the Cren7 family.</text>
</comment>
<dbReference type="EMBL" id="CP001404">
    <property type="protein sequence ID" value="ACP48703.1"/>
    <property type="molecule type" value="Genomic_DNA"/>
</dbReference>
<dbReference type="RefSeq" id="WP_012711256.1">
    <property type="nucleotide sequence ID" value="NC_012623.1"/>
</dbReference>
<dbReference type="BMRB" id="C3NHU3"/>
<dbReference type="SMR" id="C3NHU3"/>
<dbReference type="GeneID" id="84061563"/>
<dbReference type="KEGG" id="sin:YN1551_1615"/>
<dbReference type="HOGENOM" id="CLU_2911298_0_0_2"/>
<dbReference type="Proteomes" id="UP000006818">
    <property type="component" value="Chromosome"/>
</dbReference>
<dbReference type="GO" id="GO:0005694">
    <property type="term" value="C:chromosome"/>
    <property type="evidence" value="ECO:0007669"/>
    <property type="project" value="UniProtKB-SubCell"/>
</dbReference>
<dbReference type="GO" id="GO:0005737">
    <property type="term" value="C:cytoplasm"/>
    <property type="evidence" value="ECO:0007669"/>
    <property type="project" value="UniProtKB-SubCell"/>
</dbReference>
<dbReference type="GO" id="GO:0003690">
    <property type="term" value="F:double-stranded DNA binding"/>
    <property type="evidence" value="ECO:0007669"/>
    <property type="project" value="UniProtKB-UniRule"/>
</dbReference>
<dbReference type="Gene3D" id="2.30.30.610">
    <property type="entry name" value="Chromatin protein Cren7"/>
    <property type="match status" value="1"/>
</dbReference>
<dbReference type="HAMAP" id="MF_01387">
    <property type="entry name" value="Chromatin_Cren7"/>
    <property type="match status" value="1"/>
</dbReference>
<dbReference type="InterPro" id="IPR038647">
    <property type="entry name" value="Cren7_sf"/>
</dbReference>
<dbReference type="InterPro" id="IPR020906">
    <property type="entry name" value="dsDNA-bd_Cren7"/>
</dbReference>
<dbReference type="Pfam" id="PF11520">
    <property type="entry name" value="Cren7"/>
    <property type="match status" value="1"/>
</dbReference>